<sequence length="349" mass="37242">MAFKIASSPHVTRNLHTSTVMQRVILCLLPGLVVQCAFFGWGTLIQVLLAIIVALSCEAAVMKLRNRSIKASLSDNSAMLTAILIGVAIPPLAPWWMIVMGTVFAIVIVKHLYGGLGHNLFNPAMAAYVLLLVSFPVQMTSWIAPSTVALNTPSVIDSLQLIFNVGAHGGMEQFRLGIDGISMATPLDTLKTDLSLGLTTTESMAKSIFDGGTGVGWFWVNLAYLAGGLVLLKLKAIRWHISTGVLAGLFVASSIGFLLSPDTQASPLFHLFSGATMLAAFFIATDPVTAATSPRGRLIFGALIGVLVYVIRTQGGYPDAFAFAVLLANLCAPFIDYYVRPRTYGHSAP</sequence>
<reference key="1">
    <citation type="submission" date="2006-08" db="EMBL/GenBank/DDBJ databases">
        <title>Complete sequence of chromosome 1 of Shewanella sp. MR-7.</title>
        <authorList>
            <person name="Copeland A."/>
            <person name="Lucas S."/>
            <person name="Lapidus A."/>
            <person name="Barry K."/>
            <person name="Detter J.C."/>
            <person name="Glavina del Rio T."/>
            <person name="Hammon N."/>
            <person name="Israni S."/>
            <person name="Dalin E."/>
            <person name="Tice H."/>
            <person name="Pitluck S."/>
            <person name="Kiss H."/>
            <person name="Brettin T."/>
            <person name="Bruce D."/>
            <person name="Han C."/>
            <person name="Tapia R."/>
            <person name="Gilna P."/>
            <person name="Schmutz J."/>
            <person name="Larimer F."/>
            <person name="Land M."/>
            <person name="Hauser L."/>
            <person name="Kyrpides N."/>
            <person name="Mikhailova N."/>
            <person name="Nealson K."/>
            <person name="Konstantinidis K."/>
            <person name="Klappenbach J."/>
            <person name="Tiedje J."/>
            <person name="Richardson P."/>
        </authorList>
    </citation>
    <scope>NUCLEOTIDE SEQUENCE [LARGE SCALE GENOMIC DNA]</scope>
    <source>
        <strain>MR-7</strain>
    </source>
</reference>
<name>RNFD_SHESR</name>
<protein>
    <recommendedName>
        <fullName evidence="1">Ion-translocating oxidoreductase complex subunit D</fullName>
        <ecNumber evidence="1">7.-.-.-</ecNumber>
    </recommendedName>
    <alternativeName>
        <fullName evidence="1">Rnf electron transport complex subunit D</fullName>
    </alternativeName>
</protein>
<accession>Q0HVF8</accession>
<organism>
    <name type="scientific">Shewanella sp. (strain MR-7)</name>
    <dbReference type="NCBI Taxonomy" id="60481"/>
    <lineage>
        <taxon>Bacteria</taxon>
        <taxon>Pseudomonadati</taxon>
        <taxon>Pseudomonadota</taxon>
        <taxon>Gammaproteobacteria</taxon>
        <taxon>Alteromonadales</taxon>
        <taxon>Shewanellaceae</taxon>
        <taxon>Shewanella</taxon>
    </lineage>
</organism>
<keyword id="KW-0997">Cell inner membrane</keyword>
<keyword id="KW-1003">Cell membrane</keyword>
<keyword id="KW-0249">Electron transport</keyword>
<keyword id="KW-0285">Flavoprotein</keyword>
<keyword id="KW-0288">FMN</keyword>
<keyword id="KW-0472">Membrane</keyword>
<keyword id="KW-0597">Phosphoprotein</keyword>
<keyword id="KW-1278">Translocase</keyword>
<keyword id="KW-0812">Transmembrane</keyword>
<keyword id="KW-1133">Transmembrane helix</keyword>
<keyword id="KW-0813">Transport</keyword>
<dbReference type="EC" id="7.-.-.-" evidence="1"/>
<dbReference type="EMBL" id="CP000444">
    <property type="protein sequence ID" value="ABI42897.1"/>
    <property type="molecule type" value="Genomic_DNA"/>
</dbReference>
<dbReference type="SMR" id="Q0HVF8"/>
<dbReference type="KEGG" id="shm:Shewmr7_1908"/>
<dbReference type="HOGENOM" id="CLU_042020_0_0_6"/>
<dbReference type="GO" id="GO:0005886">
    <property type="term" value="C:plasma membrane"/>
    <property type="evidence" value="ECO:0007669"/>
    <property type="project" value="UniProtKB-SubCell"/>
</dbReference>
<dbReference type="GO" id="GO:0022900">
    <property type="term" value="P:electron transport chain"/>
    <property type="evidence" value="ECO:0007669"/>
    <property type="project" value="UniProtKB-UniRule"/>
</dbReference>
<dbReference type="GO" id="GO:0055085">
    <property type="term" value="P:transmembrane transport"/>
    <property type="evidence" value="ECO:0007669"/>
    <property type="project" value="InterPro"/>
</dbReference>
<dbReference type="HAMAP" id="MF_00462">
    <property type="entry name" value="RsxD_RnfD"/>
    <property type="match status" value="1"/>
</dbReference>
<dbReference type="InterPro" id="IPR004338">
    <property type="entry name" value="NqrB/RnfD"/>
</dbReference>
<dbReference type="InterPro" id="IPR011303">
    <property type="entry name" value="RnfD_bac"/>
</dbReference>
<dbReference type="NCBIfam" id="NF002011">
    <property type="entry name" value="PRK00816.1"/>
    <property type="match status" value="1"/>
</dbReference>
<dbReference type="NCBIfam" id="TIGR01946">
    <property type="entry name" value="rnfD"/>
    <property type="match status" value="1"/>
</dbReference>
<dbReference type="PANTHER" id="PTHR30578">
    <property type="entry name" value="ELECTRON TRANSPORT COMPLEX PROTEIN RNFD"/>
    <property type="match status" value="1"/>
</dbReference>
<dbReference type="PANTHER" id="PTHR30578:SF0">
    <property type="entry name" value="ION-TRANSLOCATING OXIDOREDUCTASE COMPLEX SUBUNIT D"/>
    <property type="match status" value="1"/>
</dbReference>
<dbReference type="Pfam" id="PF03116">
    <property type="entry name" value="NQR2_RnfD_RnfE"/>
    <property type="match status" value="1"/>
</dbReference>
<comment type="function">
    <text evidence="1">Part of a membrane-bound complex that couples electron transfer with translocation of ions across the membrane.</text>
</comment>
<comment type="cofactor">
    <cofactor evidence="1">
        <name>FMN</name>
        <dbReference type="ChEBI" id="CHEBI:58210"/>
    </cofactor>
</comment>
<comment type="subunit">
    <text evidence="1">The complex is composed of six subunits: RnfA, RnfB, RnfC, RnfD, RnfE and RnfG.</text>
</comment>
<comment type="subcellular location">
    <subcellularLocation>
        <location evidence="1">Cell inner membrane</location>
        <topology evidence="1">Multi-pass membrane protein</topology>
    </subcellularLocation>
</comment>
<comment type="similarity">
    <text evidence="1">Belongs to the NqrB/RnfD family.</text>
</comment>
<evidence type="ECO:0000255" key="1">
    <source>
        <dbReference type="HAMAP-Rule" id="MF_00462"/>
    </source>
</evidence>
<gene>
    <name evidence="1" type="primary">rnfD</name>
    <name type="ordered locus">Shewmr7_1908</name>
</gene>
<proteinExistence type="inferred from homology"/>
<feature type="chain" id="PRO_1000013632" description="Ion-translocating oxidoreductase complex subunit D">
    <location>
        <begin position="1"/>
        <end position="349"/>
    </location>
</feature>
<feature type="transmembrane region" description="Helical" evidence="1">
    <location>
        <begin position="36"/>
        <end position="56"/>
    </location>
</feature>
<feature type="transmembrane region" description="Helical" evidence="1">
    <location>
        <begin position="77"/>
        <end position="99"/>
    </location>
</feature>
<feature type="transmembrane region" description="Helical" evidence="1">
    <location>
        <begin position="124"/>
        <end position="144"/>
    </location>
</feature>
<feature type="transmembrane region" description="Helical" evidence="1">
    <location>
        <begin position="212"/>
        <end position="232"/>
    </location>
</feature>
<feature type="transmembrane region" description="Helical" evidence="1">
    <location>
        <begin position="239"/>
        <end position="259"/>
    </location>
</feature>
<feature type="transmembrane region" description="Helical" evidence="1">
    <location>
        <begin position="265"/>
        <end position="285"/>
    </location>
</feature>
<feature type="transmembrane region" description="Helical" evidence="1">
    <location>
        <begin position="291"/>
        <end position="311"/>
    </location>
</feature>
<feature type="transmembrane region" description="Helical" evidence="1">
    <location>
        <begin position="315"/>
        <end position="335"/>
    </location>
</feature>
<feature type="modified residue" description="FMN phosphoryl threonine" evidence="1">
    <location>
        <position position="185"/>
    </location>
</feature>